<feature type="chain" id="PRO_0000321997" description="C4-dicarboxylate transport protein">
    <location>
        <begin position="1"/>
        <end position="448"/>
    </location>
</feature>
<feature type="transmembrane region" description="Helical" evidence="1">
    <location>
        <begin position="13"/>
        <end position="33"/>
    </location>
</feature>
<feature type="transmembrane region" description="Helical" evidence="1">
    <location>
        <begin position="49"/>
        <end position="69"/>
    </location>
</feature>
<feature type="transmembrane region" description="Helical" evidence="1">
    <location>
        <begin position="81"/>
        <end position="101"/>
    </location>
</feature>
<feature type="transmembrane region" description="Helical" evidence="1">
    <location>
        <begin position="149"/>
        <end position="169"/>
    </location>
</feature>
<feature type="transmembrane region" description="Helical" evidence="1">
    <location>
        <begin position="193"/>
        <end position="213"/>
    </location>
</feature>
<feature type="transmembrane region" description="Helical" evidence="1">
    <location>
        <begin position="227"/>
        <end position="247"/>
    </location>
</feature>
<feature type="transmembrane region" description="Helical" evidence="1">
    <location>
        <begin position="294"/>
        <end position="314"/>
    </location>
</feature>
<feature type="transmembrane region" description="Helical" evidence="1">
    <location>
        <begin position="336"/>
        <end position="356"/>
    </location>
</feature>
<feature type="transmembrane region" description="Helical" evidence="1">
    <location>
        <begin position="357"/>
        <end position="377"/>
    </location>
</feature>
<name>DCTA_ALBFT</name>
<keyword id="KW-0997">Cell inner membrane</keyword>
<keyword id="KW-1003">Cell membrane</keyword>
<keyword id="KW-0472">Membrane</keyword>
<keyword id="KW-1185">Reference proteome</keyword>
<keyword id="KW-0769">Symport</keyword>
<keyword id="KW-0812">Transmembrane</keyword>
<keyword id="KW-1133">Transmembrane helix</keyword>
<keyword id="KW-0813">Transport</keyword>
<sequence length="448" mass="47750">MSKTSARKPLYKSLYAQVIFAVTIGVLLGHFYPQLGTQMKPLGDGFIKLIKMIIAPIIFCTVVVGIAGMEDMKKVGKTGGLALLYFEVMSTLALVVGLLVVNVLQPGTGMHVDPMSLDTKGIAAYTAPGKMQGSVDFLLNVIPSSVVDAFAKGEILQVLLFSVLFGFALHKFGGRGTMVFDFIEKFSHVLFDIVGIIMKVAPIGAFGAMAFTIGKYGLGSLFSLGKLMGAFYLTCLIFVFGVLGIVSRLNGFSVFKFVRYIKEELLIVLGTSSSESVLPRMMEKMENLGARKSVVGLVIPTGYSFNLDGTSIYLTMAAVFIAQATDTPMTLMQQVTLLAVLLLTSKGAAGVTGSGFIVLAATLSAVGGVPVAGLALILGIDRFMSEARALTNLVGNGVATLVVAKWTGDLDMTRLHQGLDNPTTRESQEPEAILDLQVTHMDVMKAKN</sequence>
<accession>Q21YI0</accession>
<comment type="function">
    <text evidence="1">Responsible for the transport of dicarboxylates such as succinate, fumarate, and malate from the periplasm across the membrane.</text>
</comment>
<comment type="subcellular location">
    <subcellularLocation>
        <location evidence="1">Cell inner membrane</location>
        <topology evidence="1">Multi-pass membrane protein</topology>
    </subcellularLocation>
</comment>
<comment type="similarity">
    <text evidence="1">Belongs to the dicarboxylate/amino acid:cation symporter (DAACS) (TC 2.A.23) family.</text>
</comment>
<reference key="1">
    <citation type="submission" date="2006-02" db="EMBL/GenBank/DDBJ databases">
        <title>Complete sequence of chromosome of Rhodoferax ferrireducens DSM 15236.</title>
        <authorList>
            <person name="Copeland A."/>
            <person name="Lucas S."/>
            <person name="Lapidus A."/>
            <person name="Barry K."/>
            <person name="Detter J.C."/>
            <person name="Glavina del Rio T."/>
            <person name="Hammon N."/>
            <person name="Israni S."/>
            <person name="Pitluck S."/>
            <person name="Brettin T."/>
            <person name="Bruce D."/>
            <person name="Han C."/>
            <person name="Tapia R."/>
            <person name="Gilna P."/>
            <person name="Kiss H."/>
            <person name="Schmutz J."/>
            <person name="Larimer F."/>
            <person name="Land M."/>
            <person name="Kyrpides N."/>
            <person name="Ivanova N."/>
            <person name="Richardson P."/>
        </authorList>
    </citation>
    <scope>NUCLEOTIDE SEQUENCE [LARGE SCALE GENOMIC DNA]</scope>
    <source>
        <strain>ATCC BAA-621 / DSM 15236 / T118</strain>
    </source>
</reference>
<proteinExistence type="inferred from homology"/>
<organism>
    <name type="scientific">Albidiferax ferrireducens (strain ATCC BAA-621 / DSM 15236 / T118)</name>
    <name type="common">Rhodoferax ferrireducens</name>
    <dbReference type="NCBI Taxonomy" id="338969"/>
    <lineage>
        <taxon>Bacteria</taxon>
        <taxon>Pseudomonadati</taxon>
        <taxon>Pseudomonadota</taxon>
        <taxon>Betaproteobacteria</taxon>
        <taxon>Burkholderiales</taxon>
        <taxon>Comamonadaceae</taxon>
        <taxon>Rhodoferax</taxon>
    </lineage>
</organism>
<protein>
    <recommendedName>
        <fullName evidence="1">C4-dicarboxylate transport protein</fullName>
    </recommendedName>
</protein>
<evidence type="ECO:0000255" key="1">
    <source>
        <dbReference type="HAMAP-Rule" id="MF_01300"/>
    </source>
</evidence>
<gene>
    <name evidence="1" type="primary">dctA</name>
    <name type="ordered locus">Rfer_1440</name>
</gene>
<dbReference type="EMBL" id="CP000267">
    <property type="protein sequence ID" value="ABD69173.1"/>
    <property type="molecule type" value="Genomic_DNA"/>
</dbReference>
<dbReference type="RefSeq" id="WP_011463741.1">
    <property type="nucleotide sequence ID" value="NC_007908.1"/>
</dbReference>
<dbReference type="SMR" id="Q21YI0"/>
<dbReference type="STRING" id="338969.Rfer_1440"/>
<dbReference type="KEGG" id="rfr:Rfer_1440"/>
<dbReference type="eggNOG" id="COG1301">
    <property type="taxonomic scope" value="Bacteria"/>
</dbReference>
<dbReference type="HOGENOM" id="CLU_019375_7_0_4"/>
<dbReference type="OrthoDB" id="9766690at2"/>
<dbReference type="Proteomes" id="UP000008332">
    <property type="component" value="Chromosome"/>
</dbReference>
<dbReference type="GO" id="GO:0005886">
    <property type="term" value="C:plasma membrane"/>
    <property type="evidence" value="ECO:0007669"/>
    <property type="project" value="UniProtKB-SubCell"/>
</dbReference>
<dbReference type="GO" id="GO:0015138">
    <property type="term" value="F:fumarate transmembrane transporter activity"/>
    <property type="evidence" value="ECO:0007669"/>
    <property type="project" value="TreeGrafter"/>
</dbReference>
<dbReference type="GO" id="GO:0015366">
    <property type="term" value="F:malate:proton symporter activity"/>
    <property type="evidence" value="ECO:0007669"/>
    <property type="project" value="TreeGrafter"/>
</dbReference>
<dbReference type="GO" id="GO:0015141">
    <property type="term" value="F:succinate transmembrane transporter activity"/>
    <property type="evidence" value="ECO:0007669"/>
    <property type="project" value="TreeGrafter"/>
</dbReference>
<dbReference type="GO" id="GO:0070778">
    <property type="term" value="P:L-aspartate transmembrane transport"/>
    <property type="evidence" value="ECO:0007669"/>
    <property type="project" value="TreeGrafter"/>
</dbReference>
<dbReference type="FunFam" id="1.10.3860.10:FF:000001">
    <property type="entry name" value="C4-dicarboxylate transport protein"/>
    <property type="match status" value="1"/>
</dbReference>
<dbReference type="Gene3D" id="1.10.3860.10">
    <property type="entry name" value="Sodium:dicarboxylate symporter"/>
    <property type="match status" value="1"/>
</dbReference>
<dbReference type="HAMAP" id="MF_01300">
    <property type="entry name" value="C4_dicarb_transport"/>
    <property type="match status" value="1"/>
</dbReference>
<dbReference type="InterPro" id="IPR023954">
    <property type="entry name" value="C4_dicarb_transport"/>
</dbReference>
<dbReference type="InterPro" id="IPR001991">
    <property type="entry name" value="Na-dicarboxylate_symporter"/>
</dbReference>
<dbReference type="InterPro" id="IPR018107">
    <property type="entry name" value="Na-dicarboxylate_symporter_CS"/>
</dbReference>
<dbReference type="InterPro" id="IPR036458">
    <property type="entry name" value="Na:dicarbo_symporter_sf"/>
</dbReference>
<dbReference type="NCBIfam" id="NF002461">
    <property type="entry name" value="PRK01663.1"/>
    <property type="match status" value="1"/>
</dbReference>
<dbReference type="NCBIfam" id="NF009587">
    <property type="entry name" value="PRK13027.1"/>
    <property type="match status" value="1"/>
</dbReference>
<dbReference type="PANTHER" id="PTHR42865:SF1">
    <property type="entry name" value="AEROBIC C4-DICARBOXYLATE TRANSPORT PROTEIN"/>
    <property type="match status" value="1"/>
</dbReference>
<dbReference type="PANTHER" id="PTHR42865">
    <property type="entry name" value="PROTON/GLUTAMATE-ASPARTATE SYMPORTER"/>
    <property type="match status" value="1"/>
</dbReference>
<dbReference type="Pfam" id="PF00375">
    <property type="entry name" value="SDF"/>
    <property type="match status" value="1"/>
</dbReference>
<dbReference type="PRINTS" id="PR00173">
    <property type="entry name" value="EDTRNSPORT"/>
</dbReference>
<dbReference type="SUPFAM" id="SSF118215">
    <property type="entry name" value="Proton glutamate symport protein"/>
    <property type="match status" value="1"/>
</dbReference>
<dbReference type="PROSITE" id="PS00713">
    <property type="entry name" value="NA_DICARBOXYL_SYMP_1"/>
    <property type="match status" value="1"/>
</dbReference>
<dbReference type="PROSITE" id="PS00714">
    <property type="entry name" value="NA_DICARBOXYL_SYMP_2"/>
    <property type="match status" value="1"/>
</dbReference>